<reference key="1">
    <citation type="journal article" date="2005" name="Proc. Natl. Acad. Sci. U.S.A.">
        <title>Comparison of the complete genome sequences of Pseudomonas syringae pv. syringae B728a and pv. tomato DC3000.</title>
        <authorList>
            <person name="Feil H."/>
            <person name="Feil W.S."/>
            <person name="Chain P."/>
            <person name="Larimer F."/>
            <person name="Dibartolo G."/>
            <person name="Copeland A."/>
            <person name="Lykidis A."/>
            <person name="Trong S."/>
            <person name="Nolan M."/>
            <person name="Goltsman E."/>
            <person name="Thiel J."/>
            <person name="Malfatti S."/>
            <person name="Loper J.E."/>
            <person name="Lapidus A."/>
            <person name="Detter J.C."/>
            <person name="Land M."/>
            <person name="Richardson P.M."/>
            <person name="Kyrpides N.C."/>
            <person name="Ivanova N."/>
            <person name="Lindow S.E."/>
        </authorList>
    </citation>
    <scope>NUCLEOTIDE SEQUENCE [LARGE SCALE GENOMIC DNA]</scope>
    <source>
        <strain>B728a</strain>
    </source>
</reference>
<dbReference type="EC" id="2.6.1.52" evidence="1"/>
<dbReference type="EMBL" id="CP000075">
    <property type="protein sequence ID" value="AAY38678.1"/>
    <property type="molecule type" value="Genomic_DNA"/>
</dbReference>
<dbReference type="RefSeq" id="WP_003393775.1">
    <property type="nucleotide sequence ID" value="NC_007005.1"/>
</dbReference>
<dbReference type="RefSeq" id="YP_236716.1">
    <property type="nucleotide sequence ID" value="NC_007005.1"/>
</dbReference>
<dbReference type="SMR" id="Q4ZQ94"/>
<dbReference type="STRING" id="205918.Psyr_3646"/>
<dbReference type="KEGG" id="psb:Psyr_3646"/>
<dbReference type="PATRIC" id="fig|205918.7.peg.3743"/>
<dbReference type="eggNOG" id="COG1932">
    <property type="taxonomic scope" value="Bacteria"/>
</dbReference>
<dbReference type="HOGENOM" id="CLU_034866_0_2_6"/>
<dbReference type="OrthoDB" id="9809412at2"/>
<dbReference type="UniPathway" id="UPA00135">
    <property type="reaction ID" value="UER00197"/>
</dbReference>
<dbReference type="UniPathway" id="UPA00244">
    <property type="reaction ID" value="UER00311"/>
</dbReference>
<dbReference type="Proteomes" id="UP000000426">
    <property type="component" value="Chromosome"/>
</dbReference>
<dbReference type="GO" id="GO:0005737">
    <property type="term" value="C:cytoplasm"/>
    <property type="evidence" value="ECO:0007669"/>
    <property type="project" value="UniProtKB-SubCell"/>
</dbReference>
<dbReference type="GO" id="GO:0004648">
    <property type="term" value="F:O-phospho-L-serine:2-oxoglutarate aminotransferase activity"/>
    <property type="evidence" value="ECO:0007669"/>
    <property type="project" value="UniProtKB-UniRule"/>
</dbReference>
<dbReference type="GO" id="GO:0030170">
    <property type="term" value="F:pyridoxal phosphate binding"/>
    <property type="evidence" value="ECO:0007669"/>
    <property type="project" value="UniProtKB-UniRule"/>
</dbReference>
<dbReference type="GO" id="GO:0006564">
    <property type="term" value="P:L-serine biosynthetic process"/>
    <property type="evidence" value="ECO:0007669"/>
    <property type="project" value="UniProtKB-UniRule"/>
</dbReference>
<dbReference type="GO" id="GO:0008615">
    <property type="term" value="P:pyridoxine biosynthetic process"/>
    <property type="evidence" value="ECO:0007669"/>
    <property type="project" value="UniProtKB-UniRule"/>
</dbReference>
<dbReference type="CDD" id="cd00611">
    <property type="entry name" value="PSAT_like"/>
    <property type="match status" value="1"/>
</dbReference>
<dbReference type="FunFam" id="3.40.640.10:FF:000010">
    <property type="entry name" value="Phosphoserine aminotransferase"/>
    <property type="match status" value="1"/>
</dbReference>
<dbReference type="FunFam" id="3.90.1150.10:FF:000006">
    <property type="entry name" value="Phosphoserine aminotransferase"/>
    <property type="match status" value="1"/>
</dbReference>
<dbReference type="Gene3D" id="3.90.1150.10">
    <property type="entry name" value="Aspartate Aminotransferase, domain 1"/>
    <property type="match status" value="1"/>
</dbReference>
<dbReference type="Gene3D" id="3.40.640.10">
    <property type="entry name" value="Type I PLP-dependent aspartate aminotransferase-like (Major domain)"/>
    <property type="match status" value="1"/>
</dbReference>
<dbReference type="HAMAP" id="MF_00160">
    <property type="entry name" value="SerC_aminotrans_5"/>
    <property type="match status" value="1"/>
</dbReference>
<dbReference type="InterPro" id="IPR000192">
    <property type="entry name" value="Aminotrans_V_dom"/>
</dbReference>
<dbReference type="InterPro" id="IPR022278">
    <property type="entry name" value="Pser_aminoTfrase"/>
</dbReference>
<dbReference type="InterPro" id="IPR015424">
    <property type="entry name" value="PyrdxlP-dep_Trfase"/>
</dbReference>
<dbReference type="InterPro" id="IPR015421">
    <property type="entry name" value="PyrdxlP-dep_Trfase_major"/>
</dbReference>
<dbReference type="InterPro" id="IPR015422">
    <property type="entry name" value="PyrdxlP-dep_Trfase_small"/>
</dbReference>
<dbReference type="NCBIfam" id="NF003764">
    <property type="entry name" value="PRK05355.1"/>
    <property type="match status" value="1"/>
</dbReference>
<dbReference type="NCBIfam" id="TIGR01364">
    <property type="entry name" value="serC_1"/>
    <property type="match status" value="1"/>
</dbReference>
<dbReference type="PANTHER" id="PTHR43247">
    <property type="entry name" value="PHOSPHOSERINE AMINOTRANSFERASE"/>
    <property type="match status" value="1"/>
</dbReference>
<dbReference type="PANTHER" id="PTHR43247:SF1">
    <property type="entry name" value="PHOSPHOSERINE AMINOTRANSFERASE"/>
    <property type="match status" value="1"/>
</dbReference>
<dbReference type="Pfam" id="PF00266">
    <property type="entry name" value="Aminotran_5"/>
    <property type="match status" value="1"/>
</dbReference>
<dbReference type="PIRSF" id="PIRSF000525">
    <property type="entry name" value="SerC"/>
    <property type="match status" value="1"/>
</dbReference>
<dbReference type="SUPFAM" id="SSF53383">
    <property type="entry name" value="PLP-dependent transferases"/>
    <property type="match status" value="1"/>
</dbReference>
<name>SERC_PSEU2</name>
<keyword id="KW-0028">Amino-acid biosynthesis</keyword>
<keyword id="KW-0032">Aminotransferase</keyword>
<keyword id="KW-0963">Cytoplasm</keyword>
<keyword id="KW-0663">Pyridoxal phosphate</keyword>
<keyword id="KW-0664">Pyridoxine biosynthesis</keyword>
<keyword id="KW-0718">Serine biosynthesis</keyword>
<keyword id="KW-0808">Transferase</keyword>
<feature type="chain" id="PRO_1000123475" description="Phosphoserine aminotransferase">
    <location>
        <begin position="1"/>
        <end position="361"/>
    </location>
</feature>
<feature type="binding site" evidence="1">
    <location>
        <position position="43"/>
    </location>
    <ligand>
        <name>L-glutamate</name>
        <dbReference type="ChEBI" id="CHEBI:29985"/>
    </ligand>
</feature>
<feature type="binding site" evidence="1">
    <location>
        <begin position="77"/>
        <end position="78"/>
    </location>
    <ligand>
        <name>pyridoxal 5'-phosphate</name>
        <dbReference type="ChEBI" id="CHEBI:597326"/>
    </ligand>
</feature>
<feature type="binding site" evidence="1">
    <location>
        <position position="103"/>
    </location>
    <ligand>
        <name>pyridoxal 5'-phosphate</name>
        <dbReference type="ChEBI" id="CHEBI:597326"/>
    </ligand>
</feature>
<feature type="binding site" evidence="1">
    <location>
        <position position="153"/>
    </location>
    <ligand>
        <name>pyridoxal 5'-phosphate</name>
        <dbReference type="ChEBI" id="CHEBI:597326"/>
    </ligand>
</feature>
<feature type="binding site" evidence="1">
    <location>
        <position position="173"/>
    </location>
    <ligand>
        <name>pyridoxal 5'-phosphate</name>
        <dbReference type="ChEBI" id="CHEBI:597326"/>
    </ligand>
</feature>
<feature type="binding site" evidence="1">
    <location>
        <position position="196"/>
    </location>
    <ligand>
        <name>pyridoxal 5'-phosphate</name>
        <dbReference type="ChEBI" id="CHEBI:597326"/>
    </ligand>
</feature>
<feature type="binding site" evidence="1">
    <location>
        <begin position="238"/>
        <end position="239"/>
    </location>
    <ligand>
        <name>pyridoxal 5'-phosphate</name>
        <dbReference type="ChEBI" id="CHEBI:597326"/>
    </ligand>
</feature>
<feature type="modified residue" description="N6-(pyridoxal phosphate)lysine" evidence="1">
    <location>
        <position position="197"/>
    </location>
</feature>
<comment type="function">
    <text evidence="1">Catalyzes the reversible conversion of 3-phosphohydroxypyruvate to phosphoserine and of 3-hydroxy-2-oxo-4-phosphonooxybutanoate to phosphohydroxythreonine.</text>
</comment>
<comment type="catalytic activity">
    <reaction evidence="1">
        <text>O-phospho-L-serine + 2-oxoglutarate = 3-phosphooxypyruvate + L-glutamate</text>
        <dbReference type="Rhea" id="RHEA:14329"/>
        <dbReference type="ChEBI" id="CHEBI:16810"/>
        <dbReference type="ChEBI" id="CHEBI:18110"/>
        <dbReference type="ChEBI" id="CHEBI:29985"/>
        <dbReference type="ChEBI" id="CHEBI:57524"/>
        <dbReference type="EC" id="2.6.1.52"/>
    </reaction>
</comment>
<comment type="catalytic activity">
    <reaction evidence="1">
        <text>4-(phosphooxy)-L-threonine + 2-oxoglutarate = (R)-3-hydroxy-2-oxo-4-phosphooxybutanoate + L-glutamate</text>
        <dbReference type="Rhea" id="RHEA:16573"/>
        <dbReference type="ChEBI" id="CHEBI:16810"/>
        <dbReference type="ChEBI" id="CHEBI:29985"/>
        <dbReference type="ChEBI" id="CHEBI:58452"/>
        <dbReference type="ChEBI" id="CHEBI:58538"/>
        <dbReference type="EC" id="2.6.1.52"/>
    </reaction>
</comment>
<comment type="cofactor">
    <cofactor evidence="1">
        <name>pyridoxal 5'-phosphate</name>
        <dbReference type="ChEBI" id="CHEBI:597326"/>
    </cofactor>
    <text evidence="1">Binds 1 pyridoxal phosphate per subunit.</text>
</comment>
<comment type="pathway">
    <text evidence="1">Amino-acid biosynthesis; L-serine biosynthesis; L-serine from 3-phospho-D-glycerate: step 2/3.</text>
</comment>
<comment type="pathway">
    <text evidence="1">Cofactor biosynthesis; pyridoxine 5'-phosphate biosynthesis; pyridoxine 5'-phosphate from D-erythrose 4-phosphate: step 3/5.</text>
</comment>
<comment type="subunit">
    <text evidence="1">Homodimer.</text>
</comment>
<comment type="subcellular location">
    <subcellularLocation>
        <location evidence="1">Cytoplasm</location>
    </subcellularLocation>
</comment>
<comment type="similarity">
    <text evidence="1">Belongs to the class-V pyridoxal-phosphate-dependent aminotransferase family. SerC subfamily.</text>
</comment>
<protein>
    <recommendedName>
        <fullName evidence="1">Phosphoserine aminotransferase</fullName>
        <ecNumber evidence="1">2.6.1.52</ecNumber>
    </recommendedName>
    <alternativeName>
        <fullName evidence="1">Phosphohydroxythreonine aminotransferase</fullName>
        <shortName evidence="1">PSAT</shortName>
    </alternativeName>
</protein>
<gene>
    <name evidence="1" type="primary">serC</name>
    <name type="ordered locus">Psyr_3646</name>
</gene>
<proteinExistence type="inferred from homology"/>
<accession>Q4ZQ94</accession>
<sequence>MSKRAFNFCAGPAALPEAVLLRAQAELLDWHGKGLSVMEMSHRSDEFVSIATKAEQDLRDLLSIPSNYKVLFLQGGASQQFAQIALNLLPENGKADYIDTGIWSQKAIDEASRYGAINVAASAKAYDYFAIPGQNEWKLSKDAAYVHYAPNETIGGLEFNWIPETGDVPLVADMSSDILSRPLDISRFGMIYAGAQKNIGPSGIVVVIIREDLLGRARSLCPTMLDYKVAADNGSMYNTPPTLAWYLSGLVFEWLKEQGGVEAIGKRNEIKQRTLYDFIDASELYSNPINKPDRSWMNVPFRLADDRLDKPFLAGADANGLLNLKGHRSVGGMRASIYNAIDINAINALVAYMKDFEKEHG</sequence>
<organism>
    <name type="scientific">Pseudomonas syringae pv. syringae (strain B728a)</name>
    <dbReference type="NCBI Taxonomy" id="205918"/>
    <lineage>
        <taxon>Bacteria</taxon>
        <taxon>Pseudomonadati</taxon>
        <taxon>Pseudomonadota</taxon>
        <taxon>Gammaproteobacteria</taxon>
        <taxon>Pseudomonadales</taxon>
        <taxon>Pseudomonadaceae</taxon>
        <taxon>Pseudomonas</taxon>
        <taxon>Pseudomonas syringae</taxon>
    </lineage>
</organism>
<evidence type="ECO:0000255" key="1">
    <source>
        <dbReference type="HAMAP-Rule" id="MF_00160"/>
    </source>
</evidence>